<dbReference type="EC" id="3.5.1.130" evidence="1"/>
<dbReference type="EC" id="3.5.1.132" evidence="1"/>
<dbReference type="EMBL" id="BA000002">
    <property type="protein sequence ID" value="BAA80465.2"/>
    <property type="molecule type" value="Genomic_DNA"/>
</dbReference>
<dbReference type="PIR" id="C72626">
    <property type="entry name" value="C72626"/>
</dbReference>
<dbReference type="RefSeq" id="WP_010866391.1">
    <property type="nucleotide sequence ID" value="NC_000854.2"/>
</dbReference>
<dbReference type="SMR" id="Q9YBY3"/>
<dbReference type="STRING" id="272557.APE_1467.1"/>
<dbReference type="EnsemblBacteria" id="BAA80465">
    <property type="protein sequence ID" value="BAA80465"/>
    <property type="gene ID" value="APE_1467.1"/>
</dbReference>
<dbReference type="GeneID" id="1446034"/>
<dbReference type="KEGG" id="ape:APE_1467.1"/>
<dbReference type="PATRIC" id="fig|272557.25.peg.994"/>
<dbReference type="eggNOG" id="arCOG01107">
    <property type="taxonomic scope" value="Archaea"/>
</dbReference>
<dbReference type="UniPathway" id="UPA00033">
    <property type="reaction ID" value="UER00039"/>
</dbReference>
<dbReference type="UniPathway" id="UPA00068"/>
<dbReference type="Proteomes" id="UP000002518">
    <property type="component" value="Chromosome"/>
</dbReference>
<dbReference type="GO" id="GO:0005737">
    <property type="term" value="C:cytoplasm"/>
    <property type="evidence" value="ECO:0007669"/>
    <property type="project" value="UniProtKB-SubCell"/>
</dbReference>
<dbReference type="GO" id="GO:0050897">
    <property type="term" value="F:cobalt ion binding"/>
    <property type="evidence" value="ECO:0007669"/>
    <property type="project" value="UniProtKB-UniRule"/>
</dbReference>
<dbReference type="GO" id="GO:0016811">
    <property type="term" value="F:hydrolase activity, acting on carbon-nitrogen (but not peptide) bonds, in linear amides"/>
    <property type="evidence" value="ECO:0007669"/>
    <property type="project" value="UniProtKB-UniRule"/>
</dbReference>
<dbReference type="GO" id="GO:0008270">
    <property type="term" value="F:zinc ion binding"/>
    <property type="evidence" value="ECO:0007669"/>
    <property type="project" value="UniProtKB-UniRule"/>
</dbReference>
<dbReference type="GO" id="GO:0042450">
    <property type="term" value="P:arginine biosynthetic process via ornithine"/>
    <property type="evidence" value="ECO:0007669"/>
    <property type="project" value="UniProtKB-UniRule"/>
</dbReference>
<dbReference type="GO" id="GO:0006526">
    <property type="term" value="P:L-arginine biosynthetic process"/>
    <property type="evidence" value="ECO:0007669"/>
    <property type="project" value="UniProtKB-UniPathway"/>
</dbReference>
<dbReference type="GO" id="GO:0019878">
    <property type="term" value="P:lysine biosynthetic process via aminoadipic acid"/>
    <property type="evidence" value="ECO:0007669"/>
    <property type="project" value="UniProtKB-UniRule"/>
</dbReference>
<dbReference type="CDD" id="cd05653">
    <property type="entry name" value="M20_ArgE_LysK"/>
    <property type="match status" value="1"/>
</dbReference>
<dbReference type="Gene3D" id="3.30.70.360">
    <property type="match status" value="1"/>
</dbReference>
<dbReference type="Gene3D" id="3.40.630.10">
    <property type="entry name" value="Zn peptidases"/>
    <property type="match status" value="1"/>
</dbReference>
<dbReference type="HAMAP" id="MF_01120">
    <property type="entry name" value="LysK"/>
    <property type="match status" value="1"/>
</dbReference>
<dbReference type="InterPro" id="IPR001261">
    <property type="entry name" value="ArgE/DapE_CS"/>
</dbReference>
<dbReference type="InterPro" id="IPR036264">
    <property type="entry name" value="Bact_exopeptidase_dim_dom"/>
</dbReference>
<dbReference type="InterPro" id="IPR010175">
    <property type="entry name" value="LysK"/>
</dbReference>
<dbReference type="InterPro" id="IPR002933">
    <property type="entry name" value="Peptidase_M20"/>
</dbReference>
<dbReference type="InterPro" id="IPR011650">
    <property type="entry name" value="Peptidase_M20_dimer"/>
</dbReference>
<dbReference type="InterPro" id="IPR050072">
    <property type="entry name" value="Peptidase_M20A"/>
</dbReference>
<dbReference type="NCBIfam" id="TIGR01902">
    <property type="entry name" value="dapE-lys-deAc"/>
    <property type="match status" value="1"/>
</dbReference>
<dbReference type="NCBIfam" id="NF001747">
    <property type="entry name" value="PRK00466.1"/>
    <property type="match status" value="1"/>
</dbReference>
<dbReference type="PANTHER" id="PTHR43808:SF28">
    <property type="entry name" value="[LYSW]-LYSINE_[LYSW]-ORNITHINE HYDROLASE"/>
    <property type="match status" value="1"/>
</dbReference>
<dbReference type="PANTHER" id="PTHR43808">
    <property type="entry name" value="ACETYLORNITHINE DEACETYLASE"/>
    <property type="match status" value="1"/>
</dbReference>
<dbReference type="Pfam" id="PF07687">
    <property type="entry name" value="M20_dimer"/>
    <property type="match status" value="1"/>
</dbReference>
<dbReference type="Pfam" id="PF01546">
    <property type="entry name" value="Peptidase_M20"/>
    <property type="match status" value="1"/>
</dbReference>
<dbReference type="SUPFAM" id="SSF55031">
    <property type="entry name" value="Bacterial exopeptidase dimerisation domain"/>
    <property type="match status" value="1"/>
</dbReference>
<dbReference type="SUPFAM" id="SSF53187">
    <property type="entry name" value="Zn-dependent exopeptidases"/>
    <property type="match status" value="1"/>
</dbReference>
<dbReference type="PROSITE" id="PS00758">
    <property type="entry name" value="ARGE_DAPE_CPG2_1"/>
    <property type="match status" value="1"/>
</dbReference>
<keyword id="KW-0028">Amino-acid biosynthesis</keyword>
<keyword id="KW-0055">Arginine biosynthesis</keyword>
<keyword id="KW-0170">Cobalt</keyword>
<keyword id="KW-0963">Cytoplasm</keyword>
<keyword id="KW-0378">Hydrolase</keyword>
<keyword id="KW-0457">Lysine biosynthesis</keyword>
<keyword id="KW-0479">Metal-binding</keyword>
<keyword id="KW-1185">Reference proteome</keyword>
<keyword id="KW-0862">Zinc</keyword>
<proteinExistence type="inferred from homology"/>
<organism>
    <name type="scientific">Aeropyrum pernix (strain ATCC 700893 / DSM 11879 / JCM 9820 / NBRC 100138 / K1)</name>
    <dbReference type="NCBI Taxonomy" id="272557"/>
    <lineage>
        <taxon>Archaea</taxon>
        <taxon>Thermoproteota</taxon>
        <taxon>Thermoprotei</taxon>
        <taxon>Desulfurococcales</taxon>
        <taxon>Desulfurococcaceae</taxon>
        <taxon>Aeropyrum</taxon>
    </lineage>
</organism>
<reference key="1">
    <citation type="journal article" date="1999" name="DNA Res.">
        <title>Complete genome sequence of an aerobic hyper-thermophilic crenarchaeon, Aeropyrum pernix K1.</title>
        <authorList>
            <person name="Kawarabayasi Y."/>
            <person name="Hino Y."/>
            <person name="Horikawa H."/>
            <person name="Yamazaki S."/>
            <person name="Haikawa Y."/>
            <person name="Jin-no K."/>
            <person name="Takahashi M."/>
            <person name="Sekine M."/>
            <person name="Baba S."/>
            <person name="Ankai A."/>
            <person name="Kosugi H."/>
            <person name="Hosoyama A."/>
            <person name="Fukui S."/>
            <person name="Nagai Y."/>
            <person name="Nishijima K."/>
            <person name="Nakazawa H."/>
            <person name="Takamiya M."/>
            <person name="Masuda S."/>
            <person name="Funahashi T."/>
            <person name="Tanaka T."/>
            <person name="Kudoh Y."/>
            <person name="Yamazaki J."/>
            <person name="Kushida N."/>
            <person name="Oguchi A."/>
            <person name="Aoki K."/>
            <person name="Kubota K."/>
            <person name="Nakamura Y."/>
            <person name="Nomura N."/>
            <person name="Sako Y."/>
            <person name="Kikuchi H."/>
        </authorList>
    </citation>
    <scope>NUCLEOTIDE SEQUENCE [LARGE SCALE GENOMIC DNA]</scope>
    <source>
        <strain>ATCC 700893 / DSM 11879 / JCM 9820 / NBRC 100138 / K1</strain>
    </source>
</reference>
<comment type="function">
    <text evidence="1">Catalyzes the release of L-lysine from [LysW]-gamma-L-lysine and the release of L-ornithine from [LysW]-L-ornithine.</text>
</comment>
<comment type="catalytic activity">
    <reaction evidence="1">
        <text>[amino-group carrier protein]-C-terminal-gamma-(L-lysyl)-L-glutamate + H2O = [amino-group carrier protein]-C-terminal-L-glutamate + L-lysine</text>
        <dbReference type="Rhea" id="RHEA:48684"/>
        <dbReference type="Rhea" id="RHEA-COMP:9693"/>
        <dbReference type="Rhea" id="RHEA-COMP:9715"/>
        <dbReference type="ChEBI" id="CHEBI:15377"/>
        <dbReference type="ChEBI" id="CHEBI:32551"/>
        <dbReference type="ChEBI" id="CHEBI:78525"/>
        <dbReference type="ChEBI" id="CHEBI:78526"/>
        <dbReference type="EC" id="3.5.1.130"/>
    </reaction>
</comment>
<comment type="catalytic activity">
    <reaction evidence="1">
        <text>[amino-group carrier protein]-C-terminal-gamma-(L-ornithyl)-L-glutamate + H2O = [amino-group carrier protein]-C-terminal-L-glutamate + L-ornithine</text>
        <dbReference type="Rhea" id="RHEA:52676"/>
        <dbReference type="Rhea" id="RHEA-COMP:9693"/>
        <dbReference type="Rhea" id="RHEA-COMP:13328"/>
        <dbReference type="ChEBI" id="CHEBI:15377"/>
        <dbReference type="ChEBI" id="CHEBI:46911"/>
        <dbReference type="ChEBI" id="CHEBI:78525"/>
        <dbReference type="ChEBI" id="CHEBI:136763"/>
        <dbReference type="EC" id="3.5.1.132"/>
    </reaction>
</comment>
<comment type="cofactor">
    <cofactor evidence="1">
        <name>Zn(2+)</name>
        <dbReference type="ChEBI" id="CHEBI:29105"/>
    </cofactor>
    <cofactor evidence="1">
        <name>Co(2+)</name>
        <dbReference type="ChEBI" id="CHEBI:48828"/>
    </cofactor>
    <text evidence="1">Binds 2 Zn(2+) or Co(2+) ions per subunit.</text>
</comment>
<comment type="pathway">
    <text evidence="1">Amino-acid biosynthesis; L-lysine biosynthesis via AAA pathway; L-lysine from L-alpha-aminoadipate (Thermus route): step 5/5.</text>
</comment>
<comment type="pathway">
    <text evidence="1">Amino-acid biosynthesis; L-arginine biosynthesis.</text>
</comment>
<comment type="subcellular location">
    <subcellularLocation>
        <location evidence="1">Cytoplasm</location>
    </subcellularLocation>
</comment>
<comment type="similarity">
    <text evidence="1">Belongs to the peptidase M20A family. LysK subfamily.</text>
</comment>
<name>LYSK_AERPE</name>
<accession>Q9YBY3</accession>
<protein>
    <recommendedName>
        <fullName evidence="1">Putative [LysW]-lysine/[LysW]-ornithine hydrolase</fullName>
        <ecNumber evidence="1">3.5.1.130</ecNumber>
        <ecNumber evidence="1">3.5.1.132</ecNumber>
    </recommendedName>
</protein>
<evidence type="ECO:0000255" key="1">
    <source>
        <dbReference type="HAMAP-Rule" id="MF_01120"/>
    </source>
</evidence>
<sequence>MVSSDAYVEGLAAKLALDLLRVYTPTGSEERLYPVLERWASELGLGFSLDSAGNAVLSAGPDGLPVVGLVGHLDTVPGRLEARLEGYTLWGRGAVDAKGPLAAMILGLHLASSEGLSCSSAVLGLVGEEGDSPGAWSLVSRGDTPLHIIVGEPTGGDGVAIGYRGSLTIEIECTGHEGHSSNPERGAADMLVKALASILERDSRATVTRLKAGTAANITPGRALATVNMRFNEPGLEALQLASELCSSLHQHRCHCSSISLLHPVKTSLSNATARALVASLRTAGVKPRIVVKRGTSDMNVLSIATESIAAYGPGDPRLSHTKHENIRVGDIVKAAMIYSRTLTILCNSL</sequence>
<gene>
    <name evidence="1" type="primary">lysK</name>
    <name type="ordered locus">APE_1467.1</name>
</gene>
<feature type="chain" id="PRO_0000185344" description="Putative [LysW]-lysine/[LysW]-ornithine hydrolase">
    <location>
        <begin position="1"/>
        <end position="350"/>
    </location>
</feature>
<feature type="active site" evidence="1">
    <location>
        <position position="74"/>
    </location>
</feature>
<feature type="active site" description="Proton acceptor" evidence="1">
    <location>
        <position position="128"/>
    </location>
</feature>
<feature type="binding site" evidence="1">
    <location>
        <position position="72"/>
    </location>
    <ligand>
        <name>Zn(2+)</name>
        <dbReference type="ChEBI" id="CHEBI:29105"/>
        <label>1</label>
    </ligand>
</feature>
<feature type="binding site" evidence="1">
    <location>
        <position position="96"/>
    </location>
    <ligand>
        <name>Zn(2+)</name>
        <dbReference type="ChEBI" id="CHEBI:29105"/>
        <label>1</label>
    </ligand>
</feature>
<feature type="binding site" evidence="1">
    <location>
        <position position="96"/>
    </location>
    <ligand>
        <name>Zn(2+)</name>
        <dbReference type="ChEBI" id="CHEBI:29105"/>
        <label>2</label>
    </ligand>
</feature>
<feature type="binding site" evidence="1">
    <location>
        <position position="129"/>
    </location>
    <ligand>
        <name>Zn(2+)</name>
        <dbReference type="ChEBI" id="CHEBI:29105"/>
        <label>2</label>
    </ligand>
</feature>
<feature type="binding site" evidence="1">
    <location>
        <position position="152"/>
    </location>
    <ligand>
        <name>Zn(2+)</name>
        <dbReference type="ChEBI" id="CHEBI:29105"/>
        <label>1</label>
    </ligand>
</feature>
<feature type="binding site" evidence="1">
    <location>
        <position position="321"/>
    </location>
    <ligand>
        <name>Zn(2+)</name>
        <dbReference type="ChEBI" id="CHEBI:29105"/>
        <label>2</label>
    </ligand>
</feature>